<name>FTHS_BACAC</name>
<proteinExistence type="inferred from homology"/>
<comment type="catalytic activity">
    <reaction evidence="1">
        <text>(6S)-5,6,7,8-tetrahydrofolate + formate + ATP = (6R)-10-formyltetrahydrofolate + ADP + phosphate</text>
        <dbReference type="Rhea" id="RHEA:20221"/>
        <dbReference type="ChEBI" id="CHEBI:15740"/>
        <dbReference type="ChEBI" id="CHEBI:30616"/>
        <dbReference type="ChEBI" id="CHEBI:43474"/>
        <dbReference type="ChEBI" id="CHEBI:57453"/>
        <dbReference type="ChEBI" id="CHEBI:195366"/>
        <dbReference type="ChEBI" id="CHEBI:456216"/>
        <dbReference type="EC" id="6.3.4.3"/>
    </reaction>
</comment>
<comment type="pathway">
    <text evidence="1">One-carbon metabolism; tetrahydrofolate interconversion.</text>
</comment>
<comment type="similarity">
    <text evidence="1">Belongs to the formate--tetrahydrofolate ligase family.</text>
</comment>
<reference key="1">
    <citation type="submission" date="2008-10" db="EMBL/GenBank/DDBJ databases">
        <title>Genome sequence of Bacillus anthracis str. CDC 684.</title>
        <authorList>
            <person name="Dodson R.J."/>
            <person name="Munk A.C."/>
            <person name="Brettin T."/>
            <person name="Bruce D."/>
            <person name="Detter C."/>
            <person name="Tapia R."/>
            <person name="Han C."/>
            <person name="Sutton G."/>
            <person name="Sims D."/>
        </authorList>
    </citation>
    <scope>NUCLEOTIDE SEQUENCE [LARGE SCALE GENOMIC DNA]</scope>
    <source>
        <strain>CDC 684 / NRRL 3495</strain>
    </source>
</reference>
<sequence>MTTTTTVKSDIEIAQEANMKKIQEIAADLNILEDELEPYGHYKGKLSLDIFKRLQNEKDGKVVLVTAINPTPAGEGKSTVTVGLGQAFNKIGKKTVIALREPSLGPTMGLKGGAAGGGFSQVVPMEDINLHFTGDIHAITTANNALAAFIDNHIQQGNTLGIDTRKIVWKRCVDLNDRALRNVVIGLGGPVQGVPREDGFDITVASEIMAVFCLATDIQDLKARLSRIVVAYNFANQPVTVKDLGVEGALTLLLKDALKPNLVQTLENTPAIIHGGPFANIAHGCNSVIATTMAAKLGDYVITEAGFGADLGAEKFLDIKARAAGIKPEAVVIVATIRALKMHGGVAKDQLKEENVDALAKGMENLQKHVETIQSFGVPFVIAINKFITDTDAEVAYLQEWCNERGYAVSLTEVWEKGGQGGVDLAEKVLKEIEKGENNYAPLYELELPLEEKIRTIAQKVYGAKDIEFAPKARKQLAQYEGEGWSNLPICMAKTQYSLSDDATKLGRPSDFIVTIRELKPSIGAGFIVALTGTMLTMPGLPKQPAALQMDVNEDGKAVGLF</sequence>
<accession>C3LKJ6</accession>
<keyword id="KW-0067">ATP-binding</keyword>
<keyword id="KW-0436">Ligase</keyword>
<keyword id="KW-0547">Nucleotide-binding</keyword>
<keyword id="KW-0554">One-carbon metabolism</keyword>
<feature type="chain" id="PRO_1000185245" description="Formate--tetrahydrofolate ligase">
    <location>
        <begin position="1"/>
        <end position="562"/>
    </location>
</feature>
<feature type="binding site" evidence="1">
    <location>
        <begin position="71"/>
        <end position="78"/>
    </location>
    <ligand>
        <name>ATP</name>
        <dbReference type="ChEBI" id="CHEBI:30616"/>
    </ligand>
</feature>
<organism>
    <name type="scientific">Bacillus anthracis (strain CDC 684 / NRRL 3495)</name>
    <dbReference type="NCBI Taxonomy" id="568206"/>
    <lineage>
        <taxon>Bacteria</taxon>
        <taxon>Bacillati</taxon>
        <taxon>Bacillota</taxon>
        <taxon>Bacilli</taxon>
        <taxon>Bacillales</taxon>
        <taxon>Bacillaceae</taxon>
        <taxon>Bacillus</taxon>
        <taxon>Bacillus cereus group</taxon>
    </lineage>
</organism>
<dbReference type="EC" id="6.3.4.3" evidence="1"/>
<dbReference type="EMBL" id="CP001215">
    <property type="protein sequence ID" value="ACP14946.1"/>
    <property type="molecule type" value="Genomic_DNA"/>
</dbReference>
<dbReference type="RefSeq" id="WP_003159099.1">
    <property type="nucleotide sequence ID" value="NC_012581.1"/>
</dbReference>
<dbReference type="SMR" id="C3LKJ6"/>
<dbReference type="KEGG" id="bah:BAMEG_2484"/>
<dbReference type="HOGENOM" id="CLU_003601_3_3_9"/>
<dbReference type="UniPathway" id="UPA00193"/>
<dbReference type="GO" id="GO:0005524">
    <property type="term" value="F:ATP binding"/>
    <property type="evidence" value="ECO:0007669"/>
    <property type="project" value="UniProtKB-UniRule"/>
</dbReference>
<dbReference type="GO" id="GO:0004329">
    <property type="term" value="F:formate-tetrahydrofolate ligase activity"/>
    <property type="evidence" value="ECO:0007669"/>
    <property type="project" value="UniProtKB-UniRule"/>
</dbReference>
<dbReference type="GO" id="GO:0035999">
    <property type="term" value="P:tetrahydrofolate interconversion"/>
    <property type="evidence" value="ECO:0007669"/>
    <property type="project" value="UniProtKB-UniRule"/>
</dbReference>
<dbReference type="CDD" id="cd00477">
    <property type="entry name" value="FTHFS"/>
    <property type="match status" value="1"/>
</dbReference>
<dbReference type="FunFam" id="3.30.1510.10:FF:000001">
    <property type="entry name" value="Formate--tetrahydrofolate ligase"/>
    <property type="match status" value="1"/>
</dbReference>
<dbReference type="FunFam" id="3.10.410.10:FF:000001">
    <property type="entry name" value="Putative formate--tetrahydrofolate ligase"/>
    <property type="match status" value="1"/>
</dbReference>
<dbReference type="Gene3D" id="3.30.1510.10">
    <property type="entry name" value="Domain 2, N(10)-formyltetrahydrofolate synthetase"/>
    <property type="match status" value="1"/>
</dbReference>
<dbReference type="Gene3D" id="3.10.410.10">
    <property type="entry name" value="Formyltetrahydrofolate synthetase, domain 3"/>
    <property type="match status" value="1"/>
</dbReference>
<dbReference type="Gene3D" id="3.40.50.300">
    <property type="entry name" value="P-loop containing nucleotide triphosphate hydrolases"/>
    <property type="match status" value="1"/>
</dbReference>
<dbReference type="HAMAP" id="MF_01543">
    <property type="entry name" value="FTHFS"/>
    <property type="match status" value="1"/>
</dbReference>
<dbReference type="InterPro" id="IPR000559">
    <property type="entry name" value="Formate_THF_ligase"/>
</dbReference>
<dbReference type="InterPro" id="IPR020628">
    <property type="entry name" value="Formate_THF_ligase_CS"/>
</dbReference>
<dbReference type="InterPro" id="IPR027417">
    <property type="entry name" value="P-loop_NTPase"/>
</dbReference>
<dbReference type="NCBIfam" id="NF010030">
    <property type="entry name" value="PRK13505.1"/>
    <property type="match status" value="1"/>
</dbReference>
<dbReference type="Pfam" id="PF01268">
    <property type="entry name" value="FTHFS"/>
    <property type="match status" value="1"/>
</dbReference>
<dbReference type="SUPFAM" id="SSF52540">
    <property type="entry name" value="P-loop containing nucleoside triphosphate hydrolases"/>
    <property type="match status" value="1"/>
</dbReference>
<dbReference type="PROSITE" id="PS00721">
    <property type="entry name" value="FTHFS_1"/>
    <property type="match status" value="1"/>
</dbReference>
<dbReference type="PROSITE" id="PS00722">
    <property type="entry name" value="FTHFS_2"/>
    <property type="match status" value="1"/>
</dbReference>
<evidence type="ECO:0000255" key="1">
    <source>
        <dbReference type="HAMAP-Rule" id="MF_01543"/>
    </source>
</evidence>
<protein>
    <recommendedName>
        <fullName evidence="1">Formate--tetrahydrofolate ligase</fullName>
        <ecNumber evidence="1">6.3.4.3</ecNumber>
    </recommendedName>
    <alternativeName>
        <fullName evidence="1">Formyltetrahydrofolate synthetase</fullName>
        <shortName evidence="1">FHS</shortName>
        <shortName evidence="1">FTHFS</shortName>
    </alternativeName>
</protein>
<gene>
    <name evidence="1" type="primary">fhs</name>
    <name type="ordered locus">BAMEG_2484</name>
</gene>